<evidence type="ECO:0000250" key="1"/>
<evidence type="ECO:0000255" key="2"/>
<evidence type="ECO:0000305" key="3"/>
<sequence length="113" mass="12293">MEIIMIFVSGILTAISVYLVLSKSLIRIVMGTTLLTHAANLFLITMGGLKHGTVPIYEANVKSYVDPIPQALILTAIVIAFATTAFFLVLAFRTYKELGTDNVESMKGVPEDD</sequence>
<protein>
    <recommendedName>
        <fullName>Na(+)/H(+) antiporter subunit C1</fullName>
    </recommendedName>
    <alternativeName>
        <fullName>Mnh complex subunit C1</fullName>
    </alternativeName>
</protein>
<name>MNHC1_STAAN</name>
<keyword id="KW-0050">Antiport</keyword>
<keyword id="KW-1003">Cell membrane</keyword>
<keyword id="KW-0375">Hydrogen ion transport</keyword>
<keyword id="KW-0406">Ion transport</keyword>
<keyword id="KW-0472">Membrane</keyword>
<keyword id="KW-0915">Sodium</keyword>
<keyword id="KW-0739">Sodium transport</keyword>
<keyword id="KW-0812">Transmembrane</keyword>
<keyword id="KW-1133">Transmembrane helix</keyword>
<keyword id="KW-0813">Transport</keyword>
<organism>
    <name type="scientific">Staphylococcus aureus (strain N315)</name>
    <dbReference type="NCBI Taxonomy" id="158879"/>
    <lineage>
        <taxon>Bacteria</taxon>
        <taxon>Bacillati</taxon>
        <taxon>Bacillota</taxon>
        <taxon>Bacilli</taxon>
        <taxon>Bacillales</taxon>
        <taxon>Staphylococcaceae</taxon>
        <taxon>Staphylococcus</taxon>
    </lineage>
</organism>
<comment type="function">
    <text evidence="1">Mnh complex is a Na(+)/H(+) antiporter involved in Na(+) excretion.</text>
</comment>
<comment type="subunit">
    <text evidence="1">May form a heterooligomeric complex that consists of seven subunits: mnhA1, mnhB1, mnhC1, mnhD1, mnhE1, mnhF1 and mnhG1.</text>
</comment>
<comment type="subcellular location">
    <subcellularLocation>
        <location evidence="3">Cell membrane</location>
        <topology evidence="3">Multi-pass membrane protein</topology>
    </subcellularLocation>
</comment>
<comment type="similarity">
    <text evidence="3">Belongs to the CPA3 antiporters (TC 2.A.63) subunit C family.</text>
</comment>
<feature type="chain" id="PRO_0000089149" description="Na(+)/H(+) antiporter subunit C1">
    <location>
        <begin position="1"/>
        <end position="113"/>
    </location>
</feature>
<feature type="transmembrane region" description="Helical" evidence="2">
    <location>
        <begin position="4"/>
        <end position="21"/>
    </location>
</feature>
<feature type="transmembrane region" description="Helical" evidence="2">
    <location>
        <begin position="26"/>
        <end position="48"/>
    </location>
</feature>
<feature type="transmembrane region" description="Helical" evidence="2">
    <location>
        <begin position="68"/>
        <end position="90"/>
    </location>
</feature>
<gene>
    <name type="primary">mnhC1</name>
    <name type="ordered locus">SA0811</name>
</gene>
<proteinExistence type="inferred from homology"/>
<dbReference type="EMBL" id="BA000018">
    <property type="protein sequence ID" value="BAB42050.1"/>
    <property type="molecule type" value="Genomic_DNA"/>
</dbReference>
<dbReference type="PIR" id="G89861">
    <property type="entry name" value="G89861"/>
</dbReference>
<dbReference type="RefSeq" id="WP_000402803.1">
    <property type="nucleotide sequence ID" value="NC_002745.2"/>
</dbReference>
<dbReference type="SMR" id="P60681"/>
<dbReference type="EnsemblBacteria" id="BAB42050">
    <property type="protein sequence ID" value="BAB42050"/>
    <property type="gene ID" value="BAB42050"/>
</dbReference>
<dbReference type="GeneID" id="98345271"/>
<dbReference type="KEGG" id="sau:SA0811"/>
<dbReference type="HOGENOM" id="CLU_082058_3_1_9"/>
<dbReference type="GO" id="GO:0005886">
    <property type="term" value="C:plasma membrane"/>
    <property type="evidence" value="ECO:0007669"/>
    <property type="project" value="UniProtKB-SubCell"/>
</dbReference>
<dbReference type="GO" id="GO:0015297">
    <property type="term" value="F:antiporter activity"/>
    <property type="evidence" value="ECO:0007669"/>
    <property type="project" value="UniProtKB-KW"/>
</dbReference>
<dbReference type="GO" id="GO:0008324">
    <property type="term" value="F:monoatomic cation transmembrane transporter activity"/>
    <property type="evidence" value="ECO:0007669"/>
    <property type="project" value="InterPro"/>
</dbReference>
<dbReference type="GO" id="GO:1902600">
    <property type="term" value="P:proton transmembrane transport"/>
    <property type="evidence" value="ECO:0007669"/>
    <property type="project" value="UniProtKB-KW"/>
</dbReference>
<dbReference type="GO" id="GO:0006814">
    <property type="term" value="P:sodium ion transport"/>
    <property type="evidence" value="ECO:0007669"/>
    <property type="project" value="UniProtKB-KW"/>
</dbReference>
<dbReference type="Gene3D" id="1.10.287.3510">
    <property type="match status" value="1"/>
</dbReference>
<dbReference type="InterPro" id="IPR050601">
    <property type="entry name" value="CPA3_antiporter_subunitC"/>
</dbReference>
<dbReference type="InterPro" id="IPR006673">
    <property type="entry name" value="Mnh_C1_su"/>
</dbReference>
<dbReference type="InterPro" id="IPR039428">
    <property type="entry name" value="NUOK/Mnh_C1-like"/>
</dbReference>
<dbReference type="NCBIfam" id="TIGR00941">
    <property type="entry name" value="2a6301s03"/>
    <property type="match status" value="1"/>
</dbReference>
<dbReference type="NCBIfam" id="NF006372">
    <property type="entry name" value="PRK08600.1"/>
    <property type="match status" value="1"/>
</dbReference>
<dbReference type="NCBIfam" id="NF006573">
    <property type="entry name" value="PRK09094.1"/>
    <property type="match status" value="1"/>
</dbReference>
<dbReference type="NCBIfam" id="NF009303">
    <property type="entry name" value="PRK12660.1"/>
    <property type="match status" value="1"/>
</dbReference>
<dbReference type="PANTHER" id="PTHR34583">
    <property type="entry name" value="ANTIPORTER SUBUNIT MNHC2-RELATED"/>
    <property type="match status" value="1"/>
</dbReference>
<dbReference type="PANTHER" id="PTHR34583:SF2">
    <property type="entry name" value="ANTIPORTER SUBUNIT MNHC2-RELATED"/>
    <property type="match status" value="1"/>
</dbReference>
<dbReference type="Pfam" id="PF00420">
    <property type="entry name" value="Oxidored_q2"/>
    <property type="match status" value="1"/>
</dbReference>
<reference key="1">
    <citation type="journal article" date="2001" name="Lancet">
        <title>Whole genome sequencing of meticillin-resistant Staphylococcus aureus.</title>
        <authorList>
            <person name="Kuroda M."/>
            <person name="Ohta T."/>
            <person name="Uchiyama I."/>
            <person name="Baba T."/>
            <person name="Yuzawa H."/>
            <person name="Kobayashi I."/>
            <person name="Cui L."/>
            <person name="Oguchi A."/>
            <person name="Aoki K."/>
            <person name="Nagai Y."/>
            <person name="Lian J.-Q."/>
            <person name="Ito T."/>
            <person name="Kanamori M."/>
            <person name="Matsumaru H."/>
            <person name="Maruyama A."/>
            <person name="Murakami H."/>
            <person name="Hosoyama A."/>
            <person name="Mizutani-Ui Y."/>
            <person name="Takahashi N.K."/>
            <person name="Sawano T."/>
            <person name="Inoue R."/>
            <person name="Kaito C."/>
            <person name="Sekimizu K."/>
            <person name="Hirakawa H."/>
            <person name="Kuhara S."/>
            <person name="Goto S."/>
            <person name="Yabuzaki J."/>
            <person name="Kanehisa M."/>
            <person name="Yamashita A."/>
            <person name="Oshima K."/>
            <person name="Furuya K."/>
            <person name="Yoshino C."/>
            <person name="Shiba T."/>
            <person name="Hattori M."/>
            <person name="Ogasawara N."/>
            <person name="Hayashi H."/>
            <person name="Hiramatsu K."/>
        </authorList>
    </citation>
    <scope>NUCLEOTIDE SEQUENCE [LARGE SCALE GENOMIC DNA]</scope>
    <source>
        <strain>N315</strain>
    </source>
</reference>
<accession>P60681</accession>
<accession>Q9ZNG4</accession>